<comment type="function">
    <text evidence="1">This is one of the proteins that binds to the 5S RNA in the ribosome where it forms part of the central protuberance.</text>
</comment>
<comment type="subunit">
    <text evidence="1">Part of the 50S ribosomal subunit; part of the 5S rRNA/L5/L18/L25 subcomplex. Contacts the 5S rRNA. Binds to the 5S rRNA independently of L5 and L18.</text>
</comment>
<comment type="similarity">
    <text evidence="1">Belongs to the bacterial ribosomal protein bL25 family. CTC subfamily.</text>
</comment>
<organism>
    <name type="scientific">Neisseria meningitidis serogroup C / serotype 2a (strain ATCC 700532 / DSM 15464 / FAM18)</name>
    <dbReference type="NCBI Taxonomy" id="272831"/>
    <lineage>
        <taxon>Bacteria</taxon>
        <taxon>Pseudomonadati</taxon>
        <taxon>Pseudomonadota</taxon>
        <taxon>Betaproteobacteria</taxon>
        <taxon>Neisseriales</taxon>
        <taxon>Neisseriaceae</taxon>
        <taxon>Neisseria</taxon>
    </lineage>
</organism>
<evidence type="ECO:0000255" key="1">
    <source>
        <dbReference type="HAMAP-Rule" id="MF_01334"/>
    </source>
</evidence>
<evidence type="ECO:0000305" key="2"/>
<dbReference type="EMBL" id="AM421808">
    <property type="protein sequence ID" value="CAM10100.1"/>
    <property type="molecule type" value="Genomic_DNA"/>
</dbReference>
<dbReference type="RefSeq" id="WP_002220664.1">
    <property type="nucleotide sequence ID" value="NC_008767.1"/>
</dbReference>
<dbReference type="SMR" id="A1KTB7"/>
<dbReference type="KEGG" id="nmc:NMC0817"/>
<dbReference type="HOGENOM" id="CLU_075939_0_1_4"/>
<dbReference type="Proteomes" id="UP000002286">
    <property type="component" value="Chromosome"/>
</dbReference>
<dbReference type="GO" id="GO:0022625">
    <property type="term" value="C:cytosolic large ribosomal subunit"/>
    <property type="evidence" value="ECO:0007669"/>
    <property type="project" value="TreeGrafter"/>
</dbReference>
<dbReference type="GO" id="GO:0008097">
    <property type="term" value="F:5S rRNA binding"/>
    <property type="evidence" value="ECO:0007669"/>
    <property type="project" value="InterPro"/>
</dbReference>
<dbReference type="GO" id="GO:0003735">
    <property type="term" value="F:structural constituent of ribosome"/>
    <property type="evidence" value="ECO:0007669"/>
    <property type="project" value="InterPro"/>
</dbReference>
<dbReference type="GO" id="GO:0006412">
    <property type="term" value="P:translation"/>
    <property type="evidence" value="ECO:0007669"/>
    <property type="project" value="UniProtKB-UniRule"/>
</dbReference>
<dbReference type="CDD" id="cd00495">
    <property type="entry name" value="Ribosomal_L25_TL5_CTC"/>
    <property type="match status" value="1"/>
</dbReference>
<dbReference type="FunFam" id="2.170.120.20:FF:000003">
    <property type="entry name" value="50S ribosomal protein L25"/>
    <property type="match status" value="1"/>
</dbReference>
<dbReference type="FunFam" id="2.40.240.10:FF:000002">
    <property type="entry name" value="50S ribosomal protein L25"/>
    <property type="match status" value="1"/>
</dbReference>
<dbReference type="Gene3D" id="2.170.120.20">
    <property type="entry name" value="Ribosomal protein L25, beta domain"/>
    <property type="match status" value="1"/>
</dbReference>
<dbReference type="Gene3D" id="2.40.240.10">
    <property type="entry name" value="Ribosomal Protein L25, Chain P"/>
    <property type="match status" value="1"/>
</dbReference>
<dbReference type="HAMAP" id="MF_01336">
    <property type="entry name" value="Ribosomal_bL25"/>
    <property type="match status" value="1"/>
</dbReference>
<dbReference type="HAMAP" id="MF_01334">
    <property type="entry name" value="Ribosomal_bL25_CTC"/>
    <property type="match status" value="1"/>
</dbReference>
<dbReference type="InterPro" id="IPR020056">
    <property type="entry name" value="Rbsml_bL25/Gln-tRNA_synth_N"/>
</dbReference>
<dbReference type="InterPro" id="IPR011035">
    <property type="entry name" value="Ribosomal_bL25/Gln-tRNA_synth"/>
</dbReference>
<dbReference type="InterPro" id="IPR020057">
    <property type="entry name" value="Ribosomal_bL25_b-dom"/>
</dbReference>
<dbReference type="InterPro" id="IPR037121">
    <property type="entry name" value="Ribosomal_bL25_C"/>
</dbReference>
<dbReference type="InterPro" id="IPR001021">
    <property type="entry name" value="Ribosomal_bL25_long"/>
</dbReference>
<dbReference type="InterPro" id="IPR020055">
    <property type="entry name" value="Ribosomal_bL25_short"/>
</dbReference>
<dbReference type="InterPro" id="IPR029751">
    <property type="entry name" value="Ribosomal_L25_dom"/>
</dbReference>
<dbReference type="InterPro" id="IPR020930">
    <property type="entry name" value="Ribosomal_uL5_bac-type"/>
</dbReference>
<dbReference type="NCBIfam" id="TIGR00731">
    <property type="entry name" value="bL25_bact_ctc"/>
    <property type="match status" value="1"/>
</dbReference>
<dbReference type="NCBIfam" id="NF004128">
    <property type="entry name" value="PRK05618.1-2"/>
    <property type="match status" value="1"/>
</dbReference>
<dbReference type="NCBIfam" id="NF004130">
    <property type="entry name" value="PRK05618.1-5"/>
    <property type="match status" value="1"/>
</dbReference>
<dbReference type="NCBIfam" id="NF004612">
    <property type="entry name" value="PRK05943.1"/>
    <property type="match status" value="1"/>
</dbReference>
<dbReference type="PANTHER" id="PTHR33284">
    <property type="entry name" value="RIBOSOMAL PROTEIN L25/GLN-TRNA SYNTHETASE, ANTI-CODON-BINDING DOMAIN-CONTAINING PROTEIN"/>
    <property type="match status" value="1"/>
</dbReference>
<dbReference type="PANTHER" id="PTHR33284:SF1">
    <property type="entry name" value="RIBOSOMAL PROTEIN L25_GLN-TRNA SYNTHETASE, ANTI-CODON-BINDING DOMAIN-CONTAINING PROTEIN"/>
    <property type="match status" value="1"/>
</dbReference>
<dbReference type="Pfam" id="PF01386">
    <property type="entry name" value="Ribosomal_L25p"/>
    <property type="match status" value="1"/>
</dbReference>
<dbReference type="Pfam" id="PF14693">
    <property type="entry name" value="Ribosomal_TL5_C"/>
    <property type="match status" value="1"/>
</dbReference>
<dbReference type="SUPFAM" id="SSF50715">
    <property type="entry name" value="Ribosomal protein L25-like"/>
    <property type="match status" value="1"/>
</dbReference>
<protein>
    <recommendedName>
        <fullName evidence="1">Large ribosomal subunit protein bL25</fullName>
    </recommendedName>
    <alternativeName>
        <fullName evidence="2">50S ribosomal protein L25</fullName>
    </alternativeName>
    <alternativeName>
        <fullName evidence="1">General stress protein CTC</fullName>
    </alternativeName>
</protein>
<reference key="1">
    <citation type="journal article" date="2007" name="PLoS Genet.">
        <title>Meningococcal genetic variation mechanisms viewed through comparative analysis of serogroup C strain FAM18.</title>
        <authorList>
            <person name="Bentley S.D."/>
            <person name="Vernikos G.S."/>
            <person name="Snyder L.A.S."/>
            <person name="Churcher C."/>
            <person name="Arrowsmith C."/>
            <person name="Chillingworth T."/>
            <person name="Cronin A."/>
            <person name="Davis P.H."/>
            <person name="Holroyd N.E."/>
            <person name="Jagels K."/>
            <person name="Maddison M."/>
            <person name="Moule S."/>
            <person name="Rabbinowitsch E."/>
            <person name="Sharp S."/>
            <person name="Unwin L."/>
            <person name="Whitehead S."/>
            <person name="Quail M.A."/>
            <person name="Achtman M."/>
            <person name="Barrell B.G."/>
            <person name="Saunders N.J."/>
            <person name="Parkhill J."/>
        </authorList>
    </citation>
    <scope>NUCLEOTIDE SEQUENCE [LARGE SCALE GENOMIC DNA]</scope>
    <source>
        <strain>ATCC 700532 / DSM 15464 / FAM18</strain>
    </source>
</reference>
<sequence length="190" mass="20940">MTYEIQASVREAQGTGASRRLRREGQIPGILYGEGQEPVAIAVDHKTVFYALEKESFHTALIKLSLNGETKDVIVRDFQMHPFRREVQHIDFQAVKADQPVRIRVPLHIVNAENSQAVKLQGGRVSLLNTSVEVVALPANIPAFLDLDCAEVVAGDILHLSDIKLPEGVESVSLKRNENLAVATVTGKKR</sequence>
<proteinExistence type="inferred from homology"/>
<name>RL25_NEIMF</name>
<feature type="chain" id="PRO_1000052906" description="Large ribosomal subunit protein bL25">
    <location>
        <begin position="1"/>
        <end position="190"/>
    </location>
</feature>
<gene>
    <name evidence="1" type="primary">rplY</name>
    <name evidence="1" type="synonym">ctc</name>
    <name type="ordered locus">NMC0817</name>
</gene>
<keyword id="KW-0687">Ribonucleoprotein</keyword>
<keyword id="KW-0689">Ribosomal protein</keyword>
<keyword id="KW-0694">RNA-binding</keyword>
<keyword id="KW-0699">rRNA-binding</keyword>
<accession>A1KTB7</accession>